<keyword id="KW-0029">Amino-acid transport</keyword>
<keyword id="KW-0997">Cell inner membrane</keyword>
<keyword id="KW-1003">Cell membrane</keyword>
<keyword id="KW-0472">Membrane</keyword>
<keyword id="KW-1185">Reference proteome</keyword>
<keyword id="KW-0769">Symport</keyword>
<keyword id="KW-0812">Transmembrane</keyword>
<keyword id="KW-1133">Transmembrane helix</keyword>
<keyword id="KW-0813">Transport</keyword>
<protein>
    <recommendedName>
        <fullName evidence="2 11">Proton/glutamate-aspartate symporter</fullName>
    </recommendedName>
    <alternativeName>
        <fullName evidence="11">Glutamate-aspartate carrier protein</fullName>
    </alternativeName>
    <alternativeName>
        <fullName evidence="8">Proton-glutamate-aspartate transport protein</fullName>
    </alternativeName>
</protein>
<dbReference type="EMBL" id="M32488">
    <property type="protein sequence ID" value="AAA23832.1"/>
    <property type="status" value="ALT_SEQ"/>
    <property type="molecule type" value="Genomic_DNA"/>
</dbReference>
<dbReference type="EMBL" id="M84805">
    <property type="protein sequence ID" value="AAA24323.1"/>
    <property type="molecule type" value="Genomic_DNA"/>
</dbReference>
<dbReference type="EMBL" id="U00006">
    <property type="protein sequence ID" value="AAC43171.1"/>
    <property type="molecule type" value="Genomic_DNA"/>
</dbReference>
<dbReference type="EMBL" id="U00096">
    <property type="protein sequence ID" value="AAD13460.1"/>
    <property type="molecule type" value="Genomic_DNA"/>
</dbReference>
<dbReference type="EMBL" id="AP009048">
    <property type="protein sequence ID" value="BAE78079.1"/>
    <property type="molecule type" value="Genomic_DNA"/>
</dbReference>
<dbReference type="PIR" id="A42384">
    <property type="entry name" value="A42384"/>
</dbReference>
<dbReference type="RefSeq" id="NP_418501.1">
    <property type="nucleotide sequence ID" value="NC_000913.3"/>
</dbReference>
<dbReference type="RefSeq" id="WP_000789592.1">
    <property type="nucleotide sequence ID" value="NZ_LN832404.1"/>
</dbReference>
<dbReference type="SMR" id="P21345"/>
<dbReference type="BioGRID" id="4262679">
    <property type="interactions" value="10"/>
</dbReference>
<dbReference type="FunCoup" id="P21345">
    <property type="interactions" value="124"/>
</dbReference>
<dbReference type="STRING" id="511145.b4077"/>
<dbReference type="TCDB" id="2.A.23.1.1">
    <property type="family name" value="the dicarboxylate/amino acid:cation (na(+) or h(+)) symporter (daacs) family"/>
</dbReference>
<dbReference type="PaxDb" id="511145-b4077"/>
<dbReference type="EnsemblBacteria" id="AAD13460">
    <property type="protein sequence ID" value="AAD13460"/>
    <property type="gene ID" value="b4077"/>
</dbReference>
<dbReference type="GeneID" id="948591"/>
<dbReference type="KEGG" id="ecj:JW4038"/>
<dbReference type="KEGG" id="eco:b4077"/>
<dbReference type="KEGG" id="ecoc:C3026_22035"/>
<dbReference type="PATRIC" id="fig|1411691.4.peg.2626"/>
<dbReference type="EchoBASE" id="EB0400"/>
<dbReference type="eggNOG" id="COG1301">
    <property type="taxonomic scope" value="Bacteria"/>
</dbReference>
<dbReference type="HOGENOM" id="CLU_019375_7_0_6"/>
<dbReference type="InParanoid" id="P21345"/>
<dbReference type="OMA" id="ICSFVVP"/>
<dbReference type="OrthoDB" id="9766690at2"/>
<dbReference type="PhylomeDB" id="P21345"/>
<dbReference type="BioCyc" id="EcoCyc:GLTP-MONOMER"/>
<dbReference type="BioCyc" id="MetaCyc:GLTP-MONOMER"/>
<dbReference type="PRO" id="PR:P21345"/>
<dbReference type="Proteomes" id="UP000000625">
    <property type="component" value="Chromosome"/>
</dbReference>
<dbReference type="GO" id="GO:0005886">
    <property type="term" value="C:plasma membrane"/>
    <property type="evidence" value="ECO:0000314"/>
    <property type="project" value="EcoCyc"/>
</dbReference>
<dbReference type="GO" id="GO:0005280">
    <property type="term" value="F:amino acid:proton symporter activity"/>
    <property type="evidence" value="ECO:0007669"/>
    <property type="project" value="UniProtKB-UniRule"/>
</dbReference>
<dbReference type="GO" id="GO:0022857">
    <property type="term" value="F:transmembrane transporter activity"/>
    <property type="evidence" value="ECO:0000318"/>
    <property type="project" value="GO_Central"/>
</dbReference>
<dbReference type="GO" id="GO:0006835">
    <property type="term" value="P:dicarboxylic acid transport"/>
    <property type="evidence" value="ECO:0000315"/>
    <property type="project" value="EcoCyc"/>
</dbReference>
<dbReference type="FunFam" id="1.10.3860.10:FF:000001">
    <property type="entry name" value="C4-dicarboxylate transport protein"/>
    <property type="match status" value="1"/>
</dbReference>
<dbReference type="Gene3D" id="1.10.3860.10">
    <property type="entry name" value="Sodium:dicarboxylate symporter"/>
    <property type="match status" value="1"/>
</dbReference>
<dbReference type="HAMAP" id="MF_02063">
    <property type="entry name" value="GltP_subfam"/>
    <property type="match status" value="1"/>
</dbReference>
<dbReference type="InterPro" id="IPR034703">
    <property type="entry name" value="GltP"/>
</dbReference>
<dbReference type="InterPro" id="IPR001991">
    <property type="entry name" value="Na-dicarboxylate_symporter"/>
</dbReference>
<dbReference type="InterPro" id="IPR018107">
    <property type="entry name" value="Na-dicarboxylate_symporter_CS"/>
</dbReference>
<dbReference type="InterPro" id="IPR036458">
    <property type="entry name" value="Na:dicarbo_symporter_sf"/>
</dbReference>
<dbReference type="NCBIfam" id="NF008440">
    <property type="entry name" value="PRK11283.1"/>
    <property type="match status" value="1"/>
</dbReference>
<dbReference type="PANTHER" id="PTHR42865">
    <property type="entry name" value="PROTON/GLUTAMATE-ASPARTATE SYMPORTER"/>
    <property type="match status" value="1"/>
</dbReference>
<dbReference type="PANTHER" id="PTHR42865:SF7">
    <property type="entry name" value="PROTON_GLUTAMATE-ASPARTATE SYMPORTER"/>
    <property type="match status" value="1"/>
</dbReference>
<dbReference type="Pfam" id="PF00375">
    <property type="entry name" value="SDF"/>
    <property type="match status" value="1"/>
</dbReference>
<dbReference type="PRINTS" id="PR00173">
    <property type="entry name" value="EDTRNSPORT"/>
</dbReference>
<dbReference type="SUPFAM" id="SSF118215">
    <property type="entry name" value="Proton glutamate symport protein"/>
    <property type="match status" value="1"/>
</dbReference>
<dbReference type="PROSITE" id="PS00713">
    <property type="entry name" value="NA_DICARBOXYL_SYMP_1"/>
    <property type="match status" value="1"/>
</dbReference>
<dbReference type="PROSITE" id="PS00714">
    <property type="entry name" value="NA_DICARBOXYL_SYMP_2"/>
    <property type="match status" value="1"/>
</dbReference>
<name>GLTP_ECOLI</name>
<gene>
    <name evidence="2 9 10" type="primary">gltP</name>
    <name type="ordered locus">b4077</name>
    <name type="ordered locus">JW4038</name>
</gene>
<reference key="1">
    <citation type="journal article" date="1990" name="J. Bacteriol.">
        <title>Cloning and sequencing of a gene encoding a glutamate and aspartate carrier of Escherichia coli K-12.</title>
        <authorList>
            <person name="Wallace B."/>
            <person name="Yang Y.-J."/>
            <person name="Hong J."/>
            <person name="Lum D."/>
        </authorList>
    </citation>
    <scope>NUCLEOTIDE SEQUENCE [GENOMIC DNA]</scope>
    <scope>FUNCTION</scope>
    <scope>ACTIVITY REGULATION</scope>
    <scope>SUBCELLULAR LOCATION</scope>
    <source>
        <strain>K12</strain>
    </source>
</reference>
<reference key="2">
    <citation type="journal article" date="1992" name="J. Bacteriol.">
        <title>Revised nucleotide sequence of the gltP gene, which encodes the proton-glutamate-aspartate transport protein of Escherichia coli K-12.</title>
        <authorList>
            <person name="Tolner B."/>
            <person name="Poolman B."/>
            <person name="Wallace B."/>
            <person name="Konings W.N."/>
        </authorList>
    </citation>
    <scope>NUCLEOTIDE SEQUENCE [GENOMIC DNA]</scope>
    <scope>SEQUENCE REVISION</scope>
    <source>
        <strain>K12</strain>
    </source>
</reference>
<reference key="3">
    <citation type="journal article" date="1993" name="Nucleic Acids Res.">
        <title>Analysis of the Escherichia coli genome. IV. DNA sequence of the region from 89.2 to 92.8 minutes.</title>
        <authorList>
            <person name="Blattner F.R."/>
            <person name="Burland V.D."/>
            <person name="Plunkett G. III"/>
            <person name="Sofia H.J."/>
            <person name="Daniels D.L."/>
        </authorList>
    </citation>
    <scope>NUCLEOTIDE SEQUENCE [LARGE SCALE GENOMIC DNA]</scope>
    <source>
        <strain>K12 / MG1655 / ATCC 47076</strain>
    </source>
</reference>
<reference key="4">
    <citation type="journal article" date="1997" name="Science">
        <title>The complete genome sequence of Escherichia coli K-12.</title>
        <authorList>
            <person name="Blattner F.R."/>
            <person name="Plunkett G. III"/>
            <person name="Bloch C.A."/>
            <person name="Perna N.T."/>
            <person name="Burland V."/>
            <person name="Riley M."/>
            <person name="Collado-Vides J."/>
            <person name="Glasner J.D."/>
            <person name="Rode C.K."/>
            <person name="Mayhew G.F."/>
            <person name="Gregor J."/>
            <person name="Davis N.W."/>
            <person name="Kirkpatrick H.A."/>
            <person name="Goeden M.A."/>
            <person name="Rose D.J."/>
            <person name="Mau B."/>
            <person name="Shao Y."/>
        </authorList>
    </citation>
    <scope>NUCLEOTIDE SEQUENCE [LARGE SCALE GENOMIC DNA]</scope>
    <source>
        <strain>K12 / MG1655 / ATCC 47076</strain>
    </source>
</reference>
<reference key="5">
    <citation type="journal article" date="2006" name="Mol. Syst. Biol.">
        <title>Highly accurate genome sequences of Escherichia coli K-12 strains MG1655 and W3110.</title>
        <authorList>
            <person name="Hayashi K."/>
            <person name="Morooka N."/>
            <person name="Yamamoto Y."/>
            <person name="Fujita K."/>
            <person name="Isono K."/>
            <person name="Choi S."/>
            <person name="Ohtsubo E."/>
            <person name="Baba T."/>
            <person name="Wanner B.L."/>
            <person name="Mori H."/>
            <person name="Horiuchi T."/>
        </authorList>
    </citation>
    <scope>NUCLEOTIDE SEQUENCE [LARGE SCALE GENOMIC DNA]</scope>
    <source>
        <strain>K12 / W3110 / ATCC 27325 / DSM 5911</strain>
    </source>
</reference>
<reference key="6">
    <citation type="journal article" date="1977" name="J. Biol. Chem.">
        <title>Resolution of the multiplicity of the glutamate and aspartate transport systems of Escherichia coli.</title>
        <authorList>
            <person name="Schellenberg G.D."/>
            <person name="Furlong C.E."/>
        </authorList>
    </citation>
    <scope>FUNCTION</scope>
    <scope>ACTIVITY REGULATION</scope>
    <source>
        <strain>D2W</strain>
    </source>
</reference>
<reference key="7">
    <citation type="journal article" date="1989" name="J. Bacteriol.">
        <title>Molecular cloning of gltS and gltP, which encode glutamate carriers of Escherichia coli B.</title>
        <authorList>
            <person name="Deguchi Y."/>
            <person name="Yamato I."/>
            <person name="Anraku Y."/>
        </authorList>
    </citation>
    <scope>FUNCTION</scope>
    <scope>ACTIVITY REGULATION</scope>
    <scope>BIOPHYSICOCHEMICAL PROPERTIES</scope>
    <scope>SUBCELLULAR LOCATION</scope>
    <source>
        <strain>B</strain>
    </source>
</reference>
<reference key="8">
    <citation type="journal article" date="1995" name="Mol. Microbiol.">
        <title>Cation-selectivity of the L-glutamate transporters of Escherichia coli, Bacillus stearothermophilus and Bacillus caldotenax: dependence on the environment in which the proteins are expressed.</title>
        <authorList>
            <person name="Tolner B."/>
            <person name="Ubbink-Kok T."/>
            <person name="Poolman B."/>
            <person name="Konings W.N."/>
        </authorList>
    </citation>
    <scope>FUNCTION</scope>
</reference>
<reference key="9">
    <citation type="journal article" date="2005" name="Science">
        <title>Global topology analysis of the Escherichia coli inner membrane proteome.</title>
        <authorList>
            <person name="Daley D.O."/>
            <person name="Rapp M."/>
            <person name="Granseth E."/>
            <person name="Melen K."/>
            <person name="Drew D."/>
            <person name="von Heijne G."/>
        </authorList>
    </citation>
    <scope>TOPOLOGY [LARGE SCALE ANALYSIS]</scope>
    <scope>SUBCELLULAR LOCATION</scope>
    <source>
        <strain>K12 / MG1655 / ATCC 47076</strain>
    </source>
</reference>
<comment type="function">
    <text evidence="4 5 6 7">Catalyzes the proton-dependent, binding-protein-independent transport of glutamate and aspartate.</text>
</comment>
<comment type="activity regulation">
    <text evidence="4 5 6">Glutamate uptake is inhibited by L-cysteate and beta-hydroxyaspartate. Inhibited by the uncoupler carbonylcyanide m-chlorophenylhydrazone (CCCP).</text>
</comment>
<comment type="biophysicochemical properties">
    <kinetics>
        <Vmax evidence="5">2.6 nmol/min/mg enzyme with glutamate as substrate</Vmax>
        <Vmax evidence="5">2.3 nmol/min/mg enzyme with aspartate as substrate</Vmax>
    </kinetics>
</comment>
<comment type="subcellular location">
    <subcellularLocation>
        <location evidence="2 3 4 5">Cell inner membrane</location>
        <topology evidence="2">Multi-pass membrane protein</topology>
    </subcellularLocation>
</comment>
<comment type="similarity">
    <text evidence="2 11">Belongs to the dicarboxylate/amino acid:cation symporter (DAACS) (TC 2.A.23) family. GltP subfamily.</text>
</comment>
<proteinExistence type="evidence at protein level"/>
<organism>
    <name type="scientific">Escherichia coli (strain K12)</name>
    <dbReference type="NCBI Taxonomy" id="83333"/>
    <lineage>
        <taxon>Bacteria</taxon>
        <taxon>Pseudomonadati</taxon>
        <taxon>Pseudomonadota</taxon>
        <taxon>Gammaproteobacteria</taxon>
        <taxon>Enterobacterales</taxon>
        <taxon>Enterobacteriaceae</taxon>
        <taxon>Escherichia</taxon>
    </lineage>
</organism>
<feature type="chain" id="PRO_0000202088" description="Proton/glutamate-aspartate symporter">
    <location>
        <begin position="1"/>
        <end position="437"/>
    </location>
</feature>
<feature type="topological domain" description="Cytoplasmic" evidence="11">
    <location>
        <begin position="1"/>
        <end position="5"/>
    </location>
</feature>
<feature type="transmembrane region" description="Helical" evidence="1">
    <location>
        <begin position="6"/>
        <end position="26"/>
    </location>
</feature>
<feature type="topological domain" description="Periplasmic" evidence="11">
    <location>
        <begin position="27"/>
        <end position="50"/>
    </location>
</feature>
<feature type="transmembrane region" description="Helical" evidence="1">
    <location>
        <begin position="51"/>
        <end position="71"/>
    </location>
</feature>
<feature type="topological domain" description="Cytoplasmic" evidence="11">
    <location>
        <begin position="72"/>
        <end position="84"/>
    </location>
</feature>
<feature type="transmembrane region" description="Helical" evidence="1">
    <location>
        <begin position="85"/>
        <end position="105"/>
    </location>
</feature>
<feature type="topological domain" description="Periplasmic" evidence="11">
    <location>
        <begin position="106"/>
        <end position="159"/>
    </location>
</feature>
<feature type="transmembrane region" description="Helical" evidence="1">
    <location>
        <begin position="160"/>
        <end position="180"/>
    </location>
</feature>
<feature type="topological domain" description="Cytoplasmic" evidence="11">
    <location>
        <begin position="181"/>
        <end position="210"/>
    </location>
</feature>
<feature type="transmembrane region" description="Helical" evidence="1">
    <location>
        <begin position="211"/>
        <end position="231"/>
    </location>
</feature>
<feature type="topological domain" description="Periplasmic" evidence="11">
    <location>
        <position position="232"/>
    </location>
</feature>
<feature type="transmembrane region" description="Helical" evidence="1">
    <location>
        <begin position="233"/>
        <end position="253"/>
    </location>
</feature>
<feature type="topological domain" description="Cytoplasmic" evidence="11">
    <location>
        <begin position="254"/>
        <end position="292"/>
    </location>
</feature>
<feature type="transmembrane region" description="Helical" evidence="1">
    <location>
        <begin position="293"/>
        <end position="313"/>
    </location>
</feature>
<feature type="topological domain" description="Periplasmic" evidence="11">
    <location>
        <begin position="314"/>
        <end position="324"/>
    </location>
</feature>
<feature type="transmembrane region" description="Helical" evidence="1">
    <location>
        <begin position="325"/>
        <end position="345"/>
    </location>
</feature>
<feature type="topological domain" description="Cytoplasmic" evidence="11">
    <location>
        <begin position="346"/>
        <end position="361"/>
    </location>
</feature>
<feature type="transmembrane region" description="Helical" evidence="1">
    <location>
        <begin position="362"/>
        <end position="382"/>
    </location>
</feature>
<feature type="topological domain" description="Periplasmic" evidence="11">
    <location>
        <begin position="383"/>
        <end position="387"/>
    </location>
</feature>
<feature type="transmembrane region" description="Helical" evidence="1">
    <location>
        <begin position="388"/>
        <end position="408"/>
    </location>
</feature>
<feature type="topological domain" description="Cytoplasmic" evidence="3">
    <location>
        <begin position="409"/>
        <end position="437"/>
    </location>
</feature>
<accession>P21345</accession>
<accession>Q2M6M7</accession>
<sequence length="437" mass="47159">MKNIKFSLAWQILFAMVLGILLGSYLHYHSDSRDWLVVNLLSPAGDIFIHLIKMIVVPIVISTLVVGIAGVGDAKQLGRIGAKTIIYFEVITTVAIILGITLANVFQPGAGVDMSQLATVDISKYQSTTEAVQSSSHGIMGTILSLVPTNIVASMAKGEMLPIIFFSVLFGLGLSSLPATHREPLVTVFRSISETMFKVTHMVMRYAPVGVFALIAVTVANFGFSSLWPLAKLVLLVHFAILFFALVVLGIVARLCGLSVWILIRILKDELILAYSTASSESVLPRIIEKMEAYGAPVSITSFVVPTGYSFNLDGSTLYQSIAAIFIAQLYGIDLSIWQEIILVLTLMVTSKGIAGVPGVSFVVLLATLGSVGIPLEGLAFIAGVDRILDMARTALNVVGNALAVLVIAKWEHKFDRKKALAYEREVLGKFDKTADQ</sequence>
<evidence type="ECO:0000255" key="1"/>
<evidence type="ECO:0000255" key="2">
    <source>
        <dbReference type="HAMAP-Rule" id="MF_02063"/>
    </source>
</evidence>
<evidence type="ECO:0000269" key="3">
    <source>
    </source>
</evidence>
<evidence type="ECO:0000269" key="4">
    <source>
    </source>
</evidence>
<evidence type="ECO:0000269" key="5">
    <source>
    </source>
</evidence>
<evidence type="ECO:0000269" key="6">
    <source>
    </source>
</evidence>
<evidence type="ECO:0000269" key="7">
    <source>
    </source>
</evidence>
<evidence type="ECO:0000303" key="8">
    <source>
    </source>
</evidence>
<evidence type="ECO:0000303" key="9">
    <source>
    </source>
</evidence>
<evidence type="ECO:0000303" key="10">
    <source>
    </source>
</evidence>
<evidence type="ECO:0000305" key="11"/>